<name>LPXC_LEGPH</name>
<comment type="function">
    <text evidence="1">Catalyzes the hydrolysis of UDP-3-O-myristoyl-N-acetylglucosamine to form UDP-3-O-myristoylglucosamine and acetate, the committed step in lipid A biosynthesis.</text>
</comment>
<comment type="catalytic activity">
    <reaction evidence="1">
        <text>a UDP-3-O-[(3R)-3-hydroxyacyl]-N-acetyl-alpha-D-glucosamine + H2O = a UDP-3-O-[(3R)-3-hydroxyacyl]-alpha-D-glucosamine + acetate</text>
        <dbReference type="Rhea" id="RHEA:67816"/>
        <dbReference type="ChEBI" id="CHEBI:15377"/>
        <dbReference type="ChEBI" id="CHEBI:30089"/>
        <dbReference type="ChEBI" id="CHEBI:137740"/>
        <dbReference type="ChEBI" id="CHEBI:173225"/>
        <dbReference type="EC" id="3.5.1.108"/>
    </reaction>
</comment>
<comment type="cofactor">
    <cofactor evidence="1">
        <name>Zn(2+)</name>
        <dbReference type="ChEBI" id="CHEBI:29105"/>
    </cofactor>
</comment>
<comment type="pathway">
    <text evidence="1">Glycolipid biosynthesis; lipid IV(A) biosynthesis; lipid IV(A) from (3R)-3-hydroxytetradecanoyl-[acyl-carrier-protein] and UDP-N-acetyl-alpha-D-glucosamine: step 2/6.</text>
</comment>
<comment type="similarity">
    <text evidence="1">Belongs to the LpxC family.</text>
</comment>
<dbReference type="EC" id="3.5.1.108" evidence="1"/>
<dbReference type="EMBL" id="AE017354">
    <property type="protein sequence ID" value="AAU28666.1"/>
    <property type="molecule type" value="Genomic_DNA"/>
</dbReference>
<dbReference type="RefSeq" id="WP_010948308.1">
    <property type="nucleotide sequence ID" value="NC_002942.5"/>
</dbReference>
<dbReference type="RefSeq" id="YP_096613.1">
    <property type="nucleotide sequence ID" value="NC_002942.5"/>
</dbReference>
<dbReference type="SMR" id="Q5ZSB1"/>
<dbReference type="STRING" id="272624.lpg2608"/>
<dbReference type="PaxDb" id="272624-lpg2608"/>
<dbReference type="GeneID" id="57036607"/>
<dbReference type="KEGG" id="lpn:lpg2608"/>
<dbReference type="PATRIC" id="fig|272624.6.peg.2782"/>
<dbReference type="eggNOG" id="COG0774">
    <property type="taxonomic scope" value="Bacteria"/>
</dbReference>
<dbReference type="HOGENOM" id="CLU_046528_1_0_6"/>
<dbReference type="OrthoDB" id="9802746at2"/>
<dbReference type="UniPathway" id="UPA00359">
    <property type="reaction ID" value="UER00478"/>
</dbReference>
<dbReference type="Proteomes" id="UP000000609">
    <property type="component" value="Chromosome"/>
</dbReference>
<dbReference type="GO" id="GO:0016020">
    <property type="term" value="C:membrane"/>
    <property type="evidence" value="ECO:0007669"/>
    <property type="project" value="GOC"/>
</dbReference>
<dbReference type="GO" id="GO:0046872">
    <property type="term" value="F:metal ion binding"/>
    <property type="evidence" value="ECO:0007669"/>
    <property type="project" value="UniProtKB-KW"/>
</dbReference>
<dbReference type="GO" id="GO:0103117">
    <property type="term" value="F:UDP-3-O-acyl-N-acetylglucosamine deacetylase activity"/>
    <property type="evidence" value="ECO:0007669"/>
    <property type="project" value="UniProtKB-UniRule"/>
</dbReference>
<dbReference type="GO" id="GO:0009245">
    <property type="term" value="P:lipid A biosynthetic process"/>
    <property type="evidence" value="ECO:0007669"/>
    <property type="project" value="UniProtKB-UniRule"/>
</dbReference>
<dbReference type="Gene3D" id="3.30.230.20">
    <property type="entry name" value="lpxc deacetylase, domain 1"/>
    <property type="match status" value="1"/>
</dbReference>
<dbReference type="Gene3D" id="3.30.1700.10">
    <property type="entry name" value="lpxc deacetylase, domain 2"/>
    <property type="match status" value="1"/>
</dbReference>
<dbReference type="HAMAP" id="MF_00388">
    <property type="entry name" value="LpxC"/>
    <property type="match status" value="1"/>
</dbReference>
<dbReference type="InterPro" id="IPR020568">
    <property type="entry name" value="Ribosomal_Su5_D2-typ_SF"/>
</dbReference>
<dbReference type="InterPro" id="IPR004463">
    <property type="entry name" value="UDP-acyl_GlcNac_deAcase"/>
</dbReference>
<dbReference type="InterPro" id="IPR011334">
    <property type="entry name" value="UDP-acyl_GlcNac_deAcase_C"/>
</dbReference>
<dbReference type="InterPro" id="IPR015870">
    <property type="entry name" value="UDP-acyl_N-AcGlcN_deAcase_N"/>
</dbReference>
<dbReference type="NCBIfam" id="TIGR00325">
    <property type="entry name" value="lpxC"/>
    <property type="match status" value="1"/>
</dbReference>
<dbReference type="PANTHER" id="PTHR33694">
    <property type="entry name" value="UDP-3-O-ACYL-N-ACETYLGLUCOSAMINE DEACETYLASE 1, MITOCHONDRIAL-RELATED"/>
    <property type="match status" value="1"/>
</dbReference>
<dbReference type="PANTHER" id="PTHR33694:SF1">
    <property type="entry name" value="UDP-3-O-ACYL-N-ACETYLGLUCOSAMINE DEACETYLASE 1, MITOCHONDRIAL-RELATED"/>
    <property type="match status" value="1"/>
</dbReference>
<dbReference type="Pfam" id="PF03331">
    <property type="entry name" value="LpxC"/>
    <property type="match status" value="1"/>
</dbReference>
<dbReference type="SUPFAM" id="SSF54211">
    <property type="entry name" value="Ribosomal protein S5 domain 2-like"/>
    <property type="match status" value="2"/>
</dbReference>
<reference key="1">
    <citation type="journal article" date="2004" name="Science">
        <title>The genomic sequence of the accidental pathogen Legionella pneumophila.</title>
        <authorList>
            <person name="Chien M."/>
            <person name="Morozova I."/>
            <person name="Shi S."/>
            <person name="Sheng H."/>
            <person name="Chen J."/>
            <person name="Gomez S.M."/>
            <person name="Asamani G."/>
            <person name="Hill K."/>
            <person name="Nuara J."/>
            <person name="Feder M."/>
            <person name="Rineer J."/>
            <person name="Greenberg J.J."/>
            <person name="Steshenko V."/>
            <person name="Park S.H."/>
            <person name="Zhao B."/>
            <person name="Teplitskaya E."/>
            <person name="Edwards J.R."/>
            <person name="Pampou S."/>
            <person name="Georghiou A."/>
            <person name="Chou I.-C."/>
            <person name="Iannuccilli W."/>
            <person name="Ulz M.E."/>
            <person name="Kim D.H."/>
            <person name="Geringer-Sameth A."/>
            <person name="Goldsberry C."/>
            <person name="Morozov P."/>
            <person name="Fischer S.G."/>
            <person name="Segal G."/>
            <person name="Qu X."/>
            <person name="Rzhetsky A."/>
            <person name="Zhang P."/>
            <person name="Cayanis E."/>
            <person name="De Jong P.J."/>
            <person name="Ju J."/>
            <person name="Kalachikov S."/>
            <person name="Shuman H.A."/>
            <person name="Russo J.J."/>
        </authorList>
    </citation>
    <scope>NUCLEOTIDE SEQUENCE [LARGE SCALE GENOMIC DNA]</scope>
    <source>
        <strain>Philadelphia 1 / ATCC 33152 / DSM 7513</strain>
    </source>
</reference>
<evidence type="ECO:0000255" key="1">
    <source>
        <dbReference type="HAMAP-Rule" id="MF_00388"/>
    </source>
</evidence>
<feature type="chain" id="PRO_0000253674" description="UDP-3-O-acyl-N-acetylglucosamine deacetylase">
    <location>
        <begin position="1"/>
        <end position="304"/>
    </location>
</feature>
<feature type="active site" description="Proton donor" evidence="1">
    <location>
        <position position="264"/>
    </location>
</feature>
<feature type="binding site" evidence="1">
    <location>
        <position position="78"/>
    </location>
    <ligand>
        <name>Zn(2+)</name>
        <dbReference type="ChEBI" id="CHEBI:29105"/>
    </ligand>
</feature>
<feature type="binding site" evidence="1">
    <location>
        <position position="237"/>
    </location>
    <ligand>
        <name>Zn(2+)</name>
        <dbReference type="ChEBI" id="CHEBI:29105"/>
    </ligand>
</feature>
<feature type="binding site" evidence="1">
    <location>
        <position position="241"/>
    </location>
    <ligand>
        <name>Zn(2+)</name>
        <dbReference type="ChEBI" id="CHEBI:29105"/>
    </ligand>
</feature>
<keyword id="KW-0378">Hydrolase</keyword>
<keyword id="KW-0441">Lipid A biosynthesis</keyword>
<keyword id="KW-0444">Lipid biosynthesis</keyword>
<keyword id="KW-0443">Lipid metabolism</keyword>
<keyword id="KW-0479">Metal-binding</keyword>
<keyword id="KW-1185">Reference proteome</keyword>
<keyword id="KW-0862">Zinc</keyword>
<proteinExistence type="inferred from homology"/>
<protein>
    <recommendedName>
        <fullName evidence="1">UDP-3-O-acyl-N-acetylglucosamine deacetylase</fullName>
        <shortName evidence="1">UDP-3-O-acyl-GlcNAc deacetylase</shortName>
        <ecNumber evidence="1">3.5.1.108</ecNumber>
    </recommendedName>
    <alternativeName>
        <fullName evidence="1">UDP-3-O-[R-3-hydroxymyristoyl]-N-acetylglucosamine deacetylase</fullName>
    </alternativeName>
</protein>
<accession>Q5ZSB1</accession>
<organism>
    <name type="scientific">Legionella pneumophila subsp. pneumophila (strain Philadelphia 1 / ATCC 33152 / DSM 7513)</name>
    <dbReference type="NCBI Taxonomy" id="272624"/>
    <lineage>
        <taxon>Bacteria</taxon>
        <taxon>Pseudomonadati</taxon>
        <taxon>Pseudomonadota</taxon>
        <taxon>Gammaproteobacteria</taxon>
        <taxon>Legionellales</taxon>
        <taxon>Legionellaceae</taxon>
        <taxon>Legionella</taxon>
    </lineage>
</organism>
<sequence>MIKQRTPKKVIQATGVGLHSGEKVLLTLRPAPVNTGIVFRRVDLSPVVEIPASYEYVGDTMLCTTLHHGKVKIATVEHLLSALAGLGIDNAYIDVNAPEIPIMDGSAAPFVFLIQSAGIREQNAAKRYIRILKPIRVEENGKYVQFLPHKGYKITFTIGFEHPVFNDRPQTVSFDFSGTSYVKEVCRARTFGFLSDYEKLRECDLAKGGSLDNAIVVDDYRVLNEDGLRFESEFVTHKVLDAIGDLYLLGSSLIGAFEGYKSGHELNNRLLRELMVRQDAWEYTYFDTENYLPAVHPEYYPVEA</sequence>
<gene>
    <name evidence="1" type="primary">lpxC</name>
    <name type="ordered locus">lpg2608</name>
</gene>